<name>CT191_HUMAN</name>
<protein>
    <recommendedName>
        <fullName>Putative nuclear receptor corepressor 1-like protein NCOR1P1</fullName>
    </recommendedName>
    <alternativeName>
        <fullName>Nuclear receptor corepressor 1 pseudogene 1</fullName>
    </alternativeName>
</protein>
<accession>Q9H4R4</accession>
<accession>A2RUA0</accession>
<dbReference type="EMBL" id="AL391119">
    <property type="status" value="NOT_ANNOTATED_CDS"/>
    <property type="molecule type" value="Genomic_DNA"/>
</dbReference>
<dbReference type="EMBL" id="BC132806">
    <property type="status" value="NOT_ANNOTATED_CDS"/>
    <property type="molecule type" value="mRNA"/>
</dbReference>
<dbReference type="EMBL" id="BC132808">
    <property type="status" value="NOT_ANNOTATED_CDS"/>
    <property type="molecule type" value="mRNA"/>
</dbReference>
<dbReference type="SMR" id="Q9H4R4"/>
<dbReference type="GlyGen" id="Q9H4R4">
    <property type="glycosylation" value="1 site, 1 O-linked glycan (1 site)"/>
</dbReference>
<dbReference type="iPTMnet" id="Q9H4R4"/>
<dbReference type="PhosphoSitePlus" id="Q9H4R4"/>
<dbReference type="BioMuta" id="HGNC:16724"/>
<dbReference type="jPOST" id="Q9H4R4"/>
<dbReference type="MassIVE" id="Q9H4R4"/>
<dbReference type="AGR" id="HGNC:16724"/>
<dbReference type="GeneCards" id="NCOR1P1"/>
<dbReference type="HGNC" id="HGNC:16724">
    <property type="gene designation" value="NCOR1P1"/>
</dbReference>
<dbReference type="neXtProt" id="NX_Q9H4R4"/>
<dbReference type="InParanoid" id="Q9H4R4"/>
<dbReference type="PAN-GO" id="Q9H4R4">
    <property type="GO annotations" value="3 GO annotations based on evolutionary models"/>
</dbReference>
<dbReference type="PhylomeDB" id="Q9H4R4"/>
<dbReference type="PathwayCommons" id="Q9H4R4"/>
<dbReference type="Pharos" id="Q9H4R4">
    <property type="development level" value="Tdark"/>
</dbReference>
<dbReference type="Proteomes" id="UP000005640">
    <property type="component" value="Unplaced"/>
</dbReference>
<dbReference type="RNAct" id="Q9H4R4">
    <property type="molecule type" value="protein"/>
</dbReference>
<dbReference type="Gene3D" id="1.20.5.430">
    <property type="match status" value="1"/>
</dbReference>
<dbReference type="InterPro" id="IPR051571">
    <property type="entry name" value="N-CoR_corepressor"/>
</dbReference>
<dbReference type="InterPro" id="IPR031557">
    <property type="entry name" value="N-CoR_GPS2_interact"/>
</dbReference>
<dbReference type="PANTHER" id="PTHR13992">
    <property type="entry name" value="NUCLEAR RECEPTOR CO-REPRESSOR RELATED NCOR"/>
    <property type="match status" value="1"/>
</dbReference>
<dbReference type="PANTHER" id="PTHR13992:SF5">
    <property type="entry name" value="NUCLEAR RECEPTOR COREPRESSOR 1"/>
    <property type="match status" value="1"/>
</dbReference>
<dbReference type="Pfam" id="PF15784">
    <property type="entry name" value="GPS2_interact"/>
    <property type="match status" value="1"/>
</dbReference>
<keyword id="KW-0175">Coiled coil</keyword>
<keyword id="KW-1185">Reference proteome</keyword>
<sequence length="102" mass="11336">MSSSGYPPNQGAFSTEQSHYPPHSVKYTFPSTHHQQDPAFGGKHEAPSSPILGQPCGDDQNASPSKLSKEELIECMDRVDREIAKVEQQILKLKKKQVKVFV</sequence>
<gene>
    <name type="primary">NCOR1P1</name>
    <name type="synonym">C20orf191</name>
</gene>
<evidence type="ECO:0000255" key="1"/>
<evidence type="ECO:0000256" key="2">
    <source>
        <dbReference type="SAM" id="MobiDB-lite"/>
    </source>
</evidence>
<evidence type="ECO:0000305" key="3"/>
<proteinExistence type="uncertain"/>
<reference key="1">
    <citation type="journal article" date="2001" name="Nature">
        <title>The DNA sequence and comparative analysis of human chromosome 20.</title>
        <authorList>
            <person name="Deloukas P."/>
            <person name="Matthews L.H."/>
            <person name="Ashurst J.L."/>
            <person name="Burton J."/>
            <person name="Gilbert J.G.R."/>
            <person name="Jones M."/>
            <person name="Stavrides G."/>
            <person name="Almeida J.P."/>
            <person name="Babbage A.K."/>
            <person name="Bagguley C.L."/>
            <person name="Bailey J."/>
            <person name="Barlow K.F."/>
            <person name="Bates K.N."/>
            <person name="Beard L.M."/>
            <person name="Beare D.M."/>
            <person name="Beasley O.P."/>
            <person name="Bird C.P."/>
            <person name="Blakey S.E."/>
            <person name="Bridgeman A.M."/>
            <person name="Brown A.J."/>
            <person name="Buck D."/>
            <person name="Burrill W.D."/>
            <person name="Butler A.P."/>
            <person name="Carder C."/>
            <person name="Carter N.P."/>
            <person name="Chapman J.C."/>
            <person name="Clamp M."/>
            <person name="Clark G."/>
            <person name="Clark L.N."/>
            <person name="Clark S.Y."/>
            <person name="Clee C.M."/>
            <person name="Clegg S."/>
            <person name="Cobley V.E."/>
            <person name="Collier R.E."/>
            <person name="Connor R.E."/>
            <person name="Corby N.R."/>
            <person name="Coulson A."/>
            <person name="Coville G.J."/>
            <person name="Deadman R."/>
            <person name="Dhami P.D."/>
            <person name="Dunn M."/>
            <person name="Ellington A.G."/>
            <person name="Frankland J.A."/>
            <person name="Fraser A."/>
            <person name="French L."/>
            <person name="Garner P."/>
            <person name="Grafham D.V."/>
            <person name="Griffiths C."/>
            <person name="Griffiths M.N.D."/>
            <person name="Gwilliam R."/>
            <person name="Hall R.E."/>
            <person name="Hammond S."/>
            <person name="Harley J.L."/>
            <person name="Heath P.D."/>
            <person name="Ho S."/>
            <person name="Holden J.L."/>
            <person name="Howden P.J."/>
            <person name="Huckle E."/>
            <person name="Hunt A.R."/>
            <person name="Hunt S.E."/>
            <person name="Jekosch K."/>
            <person name="Johnson C.M."/>
            <person name="Johnson D."/>
            <person name="Kay M.P."/>
            <person name="Kimberley A.M."/>
            <person name="King A."/>
            <person name="Knights A."/>
            <person name="Laird G.K."/>
            <person name="Lawlor S."/>
            <person name="Lehvaeslaiho M.H."/>
            <person name="Leversha M.A."/>
            <person name="Lloyd C."/>
            <person name="Lloyd D.M."/>
            <person name="Lovell J.D."/>
            <person name="Marsh V.L."/>
            <person name="Martin S.L."/>
            <person name="McConnachie L.J."/>
            <person name="McLay K."/>
            <person name="McMurray A.A."/>
            <person name="Milne S.A."/>
            <person name="Mistry D."/>
            <person name="Moore M.J.F."/>
            <person name="Mullikin J.C."/>
            <person name="Nickerson T."/>
            <person name="Oliver K."/>
            <person name="Parker A."/>
            <person name="Patel R."/>
            <person name="Pearce T.A.V."/>
            <person name="Peck A.I."/>
            <person name="Phillimore B.J.C.T."/>
            <person name="Prathalingam S.R."/>
            <person name="Plumb R.W."/>
            <person name="Ramsay H."/>
            <person name="Rice C.M."/>
            <person name="Ross M.T."/>
            <person name="Scott C.E."/>
            <person name="Sehra H.K."/>
            <person name="Shownkeen R."/>
            <person name="Sims S."/>
            <person name="Skuce C.D."/>
            <person name="Smith M.L."/>
            <person name="Soderlund C."/>
            <person name="Steward C.A."/>
            <person name="Sulston J.E."/>
            <person name="Swann R.M."/>
            <person name="Sycamore N."/>
            <person name="Taylor R."/>
            <person name="Tee L."/>
            <person name="Thomas D.W."/>
            <person name="Thorpe A."/>
            <person name="Tracey A."/>
            <person name="Tromans A.C."/>
            <person name="Vaudin M."/>
            <person name="Wall M."/>
            <person name="Wallis J.M."/>
            <person name="Whitehead S.L."/>
            <person name="Whittaker P."/>
            <person name="Willey D.L."/>
            <person name="Williams L."/>
            <person name="Williams S.A."/>
            <person name="Wilming L."/>
            <person name="Wray P.W."/>
            <person name="Hubbard T."/>
            <person name="Durbin R.M."/>
            <person name="Bentley D.R."/>
            <person name="Beck S."/>
            <person name="Rogers J."/>
        </authorList>
    </citation>
    <scope>NUCLEOTIDE SEQUENCE [LARGE SCALE GENOMIC DNA]</scope>
</reference>
<reference key="2">
    <citation type="journal article" date="2004" name="Genome Res.">
        <title>The status, quality, and expansion of the NIH full-length cDNA project: the Mammalian Gene Collection (MGC).</title>
        <authorList>
            <consortium name="The MGC Project Team"/>
        </authorList>
    </citation>
    <scope>NUCLEOTIDE SEQUENCE [LARGE SCALE MRNA]</scope>
    <source>
        <tissue>Testis</tissue>
    </source>
</reference>
<comment type="similarity">
    <text evidence="3">Belongs to the N-CoR nuclear receptor corepressors family.</text>
</comment>
<comment type="caution">
    <text evidence="3">Could be the product of a pseudogene. Highly similar to the N-terminus of NCOR1, but may encode a non-functional truncated protein.</text>
</comment>
<organism>
    <name type="scientific">Homo sapiens</name>
    <name type="common">Human</name>
    <dbReference type="NCBI Taxonomy" id="9606"/>
    <lineage>
        <taxon>Eukaryota</taxon>
        <taxon>Metazoa</taxon>
        <taxon>Chordata</taxon>
        <taxon>Craniata</taxon>
        <taxon>Vertebrata</taxon>
        <taxon>Euteleostomi</taxon>
        <taxon>Mammalia</taxon>
        <taxon>Eutheria</taxon>
        <taxon>Euarchontoglires</taxon>
        <taxon>Primates</taxon>
        <taxon>Haplorrhini</taxon>
        <taxon>Catarrhini</taxon>
        <taxon>Hominidae</taxon>
        <taxon>Homo</taxon>
    </lineage>
</organism>
<feature type="chain" id="PRO_0000271127" description="Putative nuclear receptor corepressor 1-like protein NCOR1P1">
    <location>
        <begin position="1"/>
        <end position="102"/>
    </location>
</feature>
<feature type="region of interest" description="Disordered" evidence="2">
    <location>
        <begin position="1"/>
        <end position="68"/>
    </location>
</feature>
<feature type="coiled-coil region" evidence="1">
    <location>
        <begin position="68"/>
        <end position="100"/>
    </location>
</feature>
<feature type="compositionally biased region" description="Polar residues" evidence="2">
    <location>
        <begin position="1"/>
        <end position="18"/>
    </location>
</feature>